<organism>
    <name type="scientific">Vibrio parahaemolyticus serotype O3:K6 (strain RIMD 2210633)</name>
    <dbReference type="NCBI Taxonomy" id="223926"/>
    <lineage>
        <taxon>Bacteria</taxon>
        <taxon>Pseudomonadati</taxon>
        <taxon>Pseudomonadota</taxon>
        <taxon>Gammaproteobacteria</taxon>
        <taxon>Vibrionales</taxon>
        <taxon>Vibrionaceae</taxon>
        <taxon>Vibrio</taxon>
    </lineage>
</organism>
<protein>
    <recommendedName>
        <fullName>L-2,4-diaminobutyric acid acetyltransferase</fullName>
        <shortName>DABA acetyltransferase</shortName>
        <ecNumber>2.3.1.178</ecNumber>
    </recommendedName>
</protein>
<evidence type="ECO:0000250" key="1"/>
<evidence type="ECO:0000255" key="2">
    <source>
        <dbReference type="PROSITE-ProRule" id="PRU00532"/>
    </source>
</evidence>
<evidence type="ECO:0000305" key="3"/>
<proteinExistence type="inferred from homology"/>
<keyword id="KW-0012">Acyltransferase</keyword>
<keyword id="KW-0808">Transferase</keyword>
<feature type="chain" id="PRO_0000220094" description="L-2,4-diaminobutyric acid acetyltransferase">
    <location>
        <begin position="1"/>
        <end position="181"/>
    </location>
</feature>
<feature type="domain" description="N-acetyltransferase" evidence="2">
    <location>
        <begin position="25"/>
        <end position="181"/>
    </location>
</feature>
<reference key="1">
    <citation type="journal article" date="2003" name="Lancet">
        <title>Genome sequence of Vibrio parahaemolyticus: a pathogenic mechanism distinct from that of V. cholerae.</title>
        <authorList>
            <person name="Makino K."/>
            <person name="Oshima K."/>
            <person name="Kurokawa K."/>
            <person name="Yokoyama K."/>
            <person name="Uda T."/>
            <person name="Tagomori K."/>
            <person name="Iijima Y."/>
            <person name="Najima M."/>
            <person name="Nakano M."/>
            <person name="Yamashita A."/>
            <person name="Kubota Y."/>
            <person name="Kimura S."/>
            <person name="Yasunaga T."/>
            <person name="Honda T."/>
            <person name="Shinagawa H."/>
            <person name="Hattori M."/>
            <person name="Iida T."/>
        </authorList>
    </citation>
    <scope>NUCLEOTIDE SEQUENCE [LARGE SCALE GENOMIC DNA]</scope>
    <source>
        <strain>RIMD 2210633</strain>
    </source>
</reference>
<dbReference type="EC" id="2.3.1.178"/>
<dbReference type="EMBL" id="BA000031">
    <property type="protein sequence ID" value="BAC59985.1"/>
    <property type="molecule type" value="Genomic_DNA"/>
</dbReference>
<dbReference type="RefSeq" id="NP_798101.1">
    <property type="nucleotide sequence ID" value="NC_004603.1"/>
</dbReference>
<dbReference type="SMR" id="Q87NZ6"/>
<dbReference type="KEGG" id="vpa:VP1722"/>
<dbReference type="PATRIC" id="fig|223926.6.peg.1642"/>
<dbReference type="eggNOG" id="COG0456">
    <property type="taxonomic scope" value="Bacteria"/>
</dbReference>
<dbReference type="HOGENOM" id="CLU_111896_0_0_6"/>
<dbReference type="UniPathway" id="UPA00067">
    <property type="reaction ID" value="UER00122"/>
</dbReference>
<dbReference type="Proteomes" id="UP000002493">
    <property type="component" value="Chromosome 1"/>
</dbReference>
<dbReference type="GO" id="GO:0033816">
    <property type="term" value="F:diaminobutyrate acetyltransferase activity"/>
    <property type="evidence" value="ECO:0007669"/>
    <property type="project" value="UniProtKB-EC"/>
</dbReference>
<dbReference type="GO" id="GO:0019491">
    <property type="term" value="P:ectoine biosynthetic process"/>
    <property type="evidence" value="ECO:0007669"/>
    <property type="project" value="UniProtKB-UniPathway"/>
</dbReference>
<dbReference type="CDD" id="cd04301">
    <property type="entry name" value="NAT_SF"/>
    <property type="match status" value="1"/>
</dbReference>
<dbReference type="Gene3D" id="3.40.630.30">
    <property type="match status" value="1"/>
</dbReference>
<dbReference type="InterPro" id="IPR016181">
    <property type="entry name" value="Acyl_CoA_acyltransferase"/>
</dbReference>
<dbReference type="InterPro" id="IPR012772">
    <property type="entry name" value="Ectoine_EctA"/>
</dbReference>
<dbReference type="InterPro" id="IPR000182">
    <property type="entry name" value="GNAT_dom"/>
</dbReference>
<dbReference type="NCBIfam" id="TIGR02406">
    <property type="entry name" value="ectoine_EctA"/>
    <property type="match status" value="1"/>
</dbReference>
<dbReference type="PANTHER" id="PTHR43072">
    <property type="entry name" value="N-ACETYLTRANSFERASE"/>
    <property type="match status" value="1"/>
</dbReference>
<dbReference type="PANTHER" id="PTHR43072:SF23">
    <property type="entry name" value="UPF0039 PROTEIN C11D3.02C"/>
    <property type="match status" value="1"/>
</dbReference>
<dbReference type="Pfam" id="PF00583">
    <property type="entry name" value="Acetyltransf_1"/>
    <property type="match status" value="1"/>
</dbReference>
<dbReference type="SUPFAM" id="SSF55729">
    <property type="entry name" value="Acyl-CoA N-acyltransferases (Nat)"/>
    <property type="match status" value="1"/>
</dbReference>
<dbReference type="PROSITE" id="PS51186">
    <property type="entry name" value="GNAT"/>
    <property type="match status" value="1"/>
</dbReference>
<gene>
    <name type="primary">ectA</name>
    <name type="ordered locus">VP1722</name>
</gene>
<comment type="function">
    <text evidence="1">Catalyzes the acetylation of L-2,4-diaminobutyrate (DABA) to gamma-N-acetyl-alpha,gamma-diaminobutyric acid (ADABA) with acetyl coenzyme A.</text>
</comment>
<comment type="catalytic activity">
    <reaction>
        <text>L-2,4-diaminobutanoate + acetyl-CoA = (2S)-4-acetamido-2-aminobutanoate + CoA + H(+)</text>
        <dbReference type="Rhea" id="RHEA:16901"/>
        <dbReference type="ChEBI" id="CHEBI:15378"/>
        <dbReference type="ChEBI" id="CHEBI:57287"/>
        <dbReference type="ChEBI" id="CHEBI:57288"/>
        <dbReference type="ChEBI" id="CHEBI:58761"/>
        <dbReference type="ChEBI" id="CHEBI:58929"/>
        <dbReference type="EC" id="2.3.1.178"/>
    </reaction>
</comment>
<comment type="pathway">
    <text>Amine and polyamine biosynthesis; ectoine biosynthesis; L-ectoine from L-aspartate 4-semialdehyde: step 2/3.</text>
</comment>
<comment type="similarity">
    <text evidence="3">Belongs to the acetyltransferase family. EctA subfamily.</text>
</comment>
<accession>Q87NZ6</accession>
<sequence length="181" mass="20718">MYFKMITSAPWVLYPEIGEDPSKKWIFREPKISDGDGIYSLIADCPPLDMNSSYCNFLQSTHFSKTSILVEHKGDIAGFISGYQKPDEQDVLFIWQVAVSPRFRGNGLAFRMLKELLEREALSEVKSVETTITEDNQASWALFKKLDAMNGNHGQVSTFLDEKAHFKGKHDTEFLYRIPLK</sequence>
<name>ECTA_VIBPA</name>